<dbReference type="EMBL" id="AM114538">
    <property type="protein sequence ID" value="CAJ38564.1"/>
    <property type="molecule type" value="mRNA"/>
</dbReference>
<dbReference type="RefSeq" id="NP_001090892.1">
    <property type="nucleotide sequence ID" value="NM_001097423.1"/>
</dbReference>
<dbReference type="SMR" id="Q1RPR6"/>
<dbReference type="FunCoup" id="Q1RPR6">
    <property type="interactions" value="226"/>
</dbReference>
<dbReference type="STRING" id="9823.ENSSSCP00000044139"/>
<dbReference type="GlyCosmos" id="Q1RPR6">
    <property type="glycosylation" value="8 sites, No reported glycans"/>
</dbReference>
<dbReference type="GlyGen" id="Q1RPR6">
    <property type="glycosylation" value="7 sites"/>
</dbReference>
<dbReference type="PaxDb" id="9823-ENSSSCP00000016835"/>
<dbReference type="PeptideAtlas" id="Q1RPR6"/>
<dbReference type="GeneID" id="100037276"/>
<dbReference type="KEGG" id="ssc:100037276"/>
<dbReference type="CTD" id="3694"/>
<dbReference type="eggNOG" id="KOG1226">
    <property type="taxonomic scope" value="Eukaryota"/>
</dbReference>
<dbReference type="InParanoid" id="Q1RPR6"/>
<dbReference type="OrthoDB" id="410592at2759"/>
<dbReference type="ChiTaRS" id="ITGB6">
    <property type="organism name" value="pig"/>
</dbReference>
<dbReference type="Proteomes" id="UP000008227">
    <property type="component" value="Unplaced"/>
</dbReference>
<dbReference type="Proteomes" id="UP000314985">
    <property type="component" value="Unplaced"/>
</dbReference>
<dbReference type="Proteomes" id="UP000694570">
    <property type="component" value="Unplaced"/>
</dbReference>
<dbReference type="Proteomes" id="UP000694571">
    <property type="component" value="Unplaced"/>
</dbReference>
<dbReference type="Proteomes" id="UP000694720">
    <property type="component" value="Unplaced"/>
</dbReference>
<dbReference type="Proteomes" id="UP000694722">
    <property type="component" value="Unplaced"/>
</dbReference>
<dbReference type="Proteomes" id="UP000694723">
    <property type="component" value="Unplaced"/>
</dbReference>
<dbReference type="Proteomes" id="UP000694724">
    <property type="component" value="Unplaced"/>
</dbReference>
<dbReference type="Proteomes" id="UP000694725">
    <property type="component" value="Unplaced"/>
</dbReference>
<dbReference type="Proteomes" id="UP000694726">
    <property type="component" value="Unplaced"/>
</dbReference>
<dbReference type="Proteomes" id="UP000694727">
    <property type="component" value="Unplaced"/>
</dbReference>
<dbReference type="Proteomes" id="UP000694728">
    <property type="component" value="Unplaced"/>
</dbReference>
<dbReference type="GO" id="GO:0009986">
    <property type="term" value="C:cell surface"/>
    <property type="evidence" value="ECO:0000318"/>
    <property type="project" value="GO_Central"/>
</dbReference>
<dbReference type="GO" id="GO:0005925">
    <property type="term" value="C:focal adhesion"/>
    <property type="evidence" value="ECO:0000250"/>
    <property type="project" value="UniProtKB"/>
</dbReference>
<dbReference type="GO" id="GO:0034685">
    <property type="term" value="C:integrin alphav-beta6 complex"/>
    <property type="evidence" value="ECO:0000250"/>
    <property type="project" value="UniProtKB"/>
</dbReference>
<dbReference type="GO" id="GO:0005178">
    <property type="term" value="F:integrin binding"/>
    <property type="evidence" value="ECO:0000318"/>
    <property type="project" value="GO_Central"/>
</dbReference>
<dbReference type="GO" id="GO:0046872">
    <property type="term" value="F:metal ion binding"/>
    <property type="evidence" value="ECO:0007669"/>
    <property type="project" value="UniProtKB-KW"/>
</dbReference>
<dbReference type="GO" id="GO:0001618">
    <property type="term" value="F:virus receptor activity"/>
    <property type="evidence" value="ECO:0007669"/>
    <property type="project" value="UniProtKB-KW"/>
</dbReference>
<dbReference type="GO" id="GO:0033627">
    <property type="term" value="P:cell adhesion mediated by integrin"/>
    <property type="evidence" value="ECO:0000250"/>
    <property type="project" value="UniProtKB"/>
</dbReference>
<dbReference type="GO" id="GO:0016477">
    <property type="term" value="P:cell migration"/>
    <property type="evidence" value="ECO:0000318"/>
    <property type="project" value="GO_Central"/>
</dbReference>
<dbReference type="GO" id="GO:0098609">
    <property type="term" value="P:cell-cell adhesion"/>
    <property type="evidence" value="ECO:0000318"/>
    <property type="project" value="GO_Central"/>
</dbReference>
<dbReference type="GO" id="GO:0007160">
    <property type="term" value="P:cell-matrix adhesion"/>
    <property type="evidence" value="ECO:0000318"/>
    <property type="project" value="GO_Central"/>
</dbReference>
<dbReference type="GO" id="GO:0007229">
    <property type="term" value="P:integrin-mediated signaling pathway"/>
    <property type="evidence" value="ECO:0000318"/>
    <property type="project" value="GO_Central"/>
</dbReference>
<dbReference type="FunFam" id="1.20.5.100:FF:000004">
    <property type="entry name" value="Integrin beta"/>
    <property type="match status" value="1"/>
</dbReference>
<dbReference type="FunFam" id="2.10.25.10:FF:000043">
    <property type="entry name" value="Integrin beta"/>
    <property type="match status" value="1"/>
</dbReference>
<dbReference type="FunFam" id="2.10.25.10:FF:000075">
    <property type="entry name" value="Integrin beta"/>
    <property type="match status" value="1"/>
</dbReference>
<dbReference type="FunFam" id="2.10.25.10:FF:000328">
    <property type="entry name" value="Integrin beta"/>
    <property type="match status" value="1"/>
</dbReference>
<dbReference type="FunFam" id="2.60.40.1510:FF:000021">
    <property type="entry name" value="Integrin beta"/>
    <property type="match status" value="1"/>
</dbReference>
<dbReference type="FunFam" id="3.30.1680.10:FF:000002">
    <property type="entry name" value="Integrin beta"/>
    <property type="match status" value="1"/>
</dbReference>
<dbReference type="FunFam" id="3.40.50.410:FF:000002">
    <property type="entry name" value="Integrin beta"/>
    <property type="match status" value="1"/>
</dbReference>
<dbReference type="FunFam" id="4.10.1240.30:FF:000004">
    <property type="entry name" value="Integrin beta"/>
    <property type="match status" value="1"/>
</dbReference>
<dbReference type="Gene3D" id="4.10.1240.30">
    <property type="match status" value="1"/>
</dbReference>
<dbReference type="Gene3D" id="1.20.5.100">
    <property type="entry name" value="Cytochrome c1, transmembrane anchor, C-terminal"/>
    <property type="match status" value="1"/>
</dbReference>
<dbReference type="Gene3D" id="2.10.25.10">
    <property type="entry name" value="Laminin"/>
    <property type="match status" value="4"/>
</dbReference>
<dbReference type="Gene3D" id="3.30.1680.10">
    <property type="entry name" value="ligand-binding face of the semaphorins, domain 2"/>
    <property type="match status" value="1"/>
</dbReference>
<dbReference type="Gene3D" id="2.60.40.1510">
    <property type="entry name" value="ntegrin, alpha v. Chain A, domain 3"/>
    <property type="match status" value="1"/>
</dbReference>
<dbReference type="Gene3D" id="3.40.50.410">
    <property type="entry name" value="von Willebrand factor, type A domain"/>
    <property type="match status" value="1"/>
</dbReference>
<dbReference type="InterPro" id="IPR040622">
    <property type="entry name" value="I-EGF_1"/>
</dbReference>
<dbReference type="InterPro" id="IPR033760">
    <property type="entry name" value="Integrin_beta_N"/>
</dbReference>
<dbReference type="InterPro" id="IPR015812">
    <property type="entry name" value="Integrin_bsu"/>
</dbReference>
<dbReference type="InterPro" id="IPR014836">
    <property type="entry name" value="Integrin_bsu_cyt_dom"/>
</dbReference>
<dbReference type="InterPro" id="IPR012896">
    <property type="entry name" value="Integrin_bsu_tail"/>
</dbReference>
<dbReference type="InterPro" id="IPR036349">
    <property type="entry name" value="Integrin_bsu_tail_dom_sf"/>
</dbReference>
<dbReference type="InterPro" id="IPR002369">
    <property type="entry name" value="Integrin_bsu_VWA"/>
</dbReference>
<dbReference type="InterPro" id="IPR032695">
    <property type="entry name" value="Integrin_dom_sf"/>
</dbReference>
<dbReference type="InterPro" id="IPR016201">
    <property type="entry name" value="PSI"/>
</dbReference>
<dbReference type="InterPro" id="IPR036465">
    <property type="entry name" value="vWFA_dom_sf"/>
</dbReference>
<dbReference type="PANTHER" id="PTHR10082">
    <property type="entry name" value="INTEGRIN BETA SUBUNIT"/>
    <property type="match status" value="1"/>
</dbReference>
<dbReference type="PANTHER" id="PTHR10082:SF11">
    <property type="entry name" value="INTEGRIN BETA-6"/>
    <property type="match status" value="1"/>
</dbReference>
<dbReference type="Pfam" id="PF23105">
    <property type="entry name" value="EGF_integrin"/>
    <property type="match status" value="1"/>
</dbReference>
<dbReference type="Pfam" id="PF18372">
    <property type="entry name" value="I-EGF_1"/>
    <property type="match status" value="1"/>
</dbReference>
<dbReference type="Pfam" id="PF08725">
    <property type="entry name" value="Integrin_b_cyt"/>
    <property type="match status" value="1"/>
</dbReference>
<dbReference type="Pfam" id="PF07965">
    <property type="entry name" value="Integrin_B_tail"/>
    <property type="match status" value="1"/>
</dbReference>
<dbReference type="Pfam" id="PF00362">
    <property type="entry name" value="Integrin_beta"/>
    <property type="match status" value="1"/>
</dbReference>
<dbReference type="Pfam" id="PF17205">
    <property type="entry name" value="PSI_integrin"/>
    <property type="match status" value="1"/>
</dbReference>
<dbReference type="PIRSF" id="PIRSF002512">
    <property type="entry name" value="Integrin_B"/>
    <property type="match status" value="1"/>
</dbReference>
<dbReference type="PRINTS" id="PR01186">
    <property type="entry name" value="INTEGRINB"/>
</dbReference>
<dbReference type="SMART" id="SM00187">
    <property type="entry name" value="INB"/>
    <property type="match status" value="1"/>
</dbReference>
<dbReference type="SMART" id="SM01241">
    <property type="entry name" value="Integrin_b_cyt"/>
    <property type="match status" value="1"/>
</dbReference>
<dbReference type="SMART" id="SM01242">
    <property type="entry name" value="Integrin_B_tail"/>
    <property type="match status" value="1"/>
</dbReference>
<dbReference type="SMART" id="SM00423">
    <property type="entry name" value="PSI"/>
    <property type="match status" value="1"/>
</dbReference>
<dbReference type="SUPFAM" id="SSF57196">
    <property type="entry name" value="EGF/Laminin"/>
    <property type="match status" value="2"/>
</dbReference>
<dbReference type="SUPFAM" id="SSF69687">
    <property type="entry name" value="Integrin beta tail domain"/>
    <property type="match status" value="1"/>
</dbReference>
<dbReference type="SUPFAM" id="SSF69179">
    <property type="entry name" value="Integrin domains"/>
    <property type="match status" value="2"/>
</dbReference>
<dbReference type="SUPFAM" id="SSF103575">
    <property type="entry name" value="Plexin repeat"/>
    <property type="match status" value="1"/>
</dbReference>
<dbReference type="SUPFAM" id="SSF53300">
    <property type="entry name" value="vWA-like"/>
    <property type="match status" value="1"/>
</dbReference>
<dbReference type="PROSITE" id="PS00022">
    <property type="entry name" value="EGF_1"/>
    <property type="match status" value="2"/>
</dbReference>
<dbReference type="PROSITE" id="PS01186">
    <property type="entry name" value="EGF_2"/>
    <property type="match status" value="1"/>
</dbReference>
<dbReference type="PROSITE" id="PS00243">
    <property type="entry name" value="I_EGF_1"/>
    <property type="match status" value="2"/>
</dbReference>
<dbReference type="PROSITE" id="PS52047">
    <property type="entry name" value="I_EGF_2"/>
    <property type="match status" value="4"/>
</dbReference>
<comment type="function">
    <text evidence="2 3">Integrin alpha-V:beta-6 (ITGAV:ITGB6) is a receptor for fibronectin and cytotactin (By similarity). It recognizes the sequence R-G-D in its ligands (By similarity). ITGAV:ITGB6 acts as a receptor for fibrillin-1 (FBN1) and mediates R-G-D-dependent cell adhesion to FBN1 (By similarity). Integrin alpha-V:beta-6 (ITGAV:ITGB6) mediates R-G-D-dependent release of transforming growth factor beta-1 (TGF-beta-1) from regulatory Latency-associated peptide (LAP), thereby playing a key role in TGF-beta-1 activation (By similarity).</text>
</comment>
<comment type="subunit">
    <text evidence="2 3">Heterodimer of an alpha and a beta subunit (By similarity). Interacts with FLNB. Interacts with HAX1. ITGAV:ITGB6 interacts with FBN1 (By similarity). ITGAV:ITGB6 interacts with TGFB1 (By similarity).</text>
</comment>
<comment type="subcellular location">
    <subcellularLocation>
        <location evidence="2">Cell membrane</location>
        <topology evidence="2">Single-pass type I membrane protein</topology>
    </subcellularLocation>
    <subcellularLocation>
        <location evidence="2">Cell junction</location>
        <location evidence="2">Focal adhesion</location>
    </subcellularLocation>
</comment>
<comment type="domain">
    <text evidence="1">The VWFA domain (or beta I domain) contains three cation-binding sites: the ligand-associated metal ion-binding site (LIMBS or SyMBS), the metal ion-dependent adhesion site (MIDAS), and the adjacent MIDAS site (ADMIDAS). This domain is also part of the ligand-binding site.</text>
</comment>
<comment type="similarity">
    <text evidence="6">Belongs to the integrin beta chain family.</text>
</comment>
<organism>
    <name type="scientific">Sus scrofa</name>
    <name type="common">Pig</name>
    <dbReference type="NCBI Taxonomy" id="9823"/>
    <lineage>
        <taxon>Eukaryota</taxon>
        <taxon>Metazoa</taxon>
        <taxon>Chordata</taxon>
        <taxon>Craniata</taxon>
        <taxon>Vertebrata</taxon>
        <taxon>Euteleostomi</taxon>
        <taxon>Mammalia</taxon>
        <taxon>Eutheria</taxon>
        <taxon>Laurasiatheria</taxon>
        <taxon>Artiodactyla</taxon>
        <taxon>Suina</taxon>
        <taxon>Suidae</taxon>
        <taxon>Sus</taxon>
    </lineage>
</organism>
<evidence type="ECO:0000250" key="1">
    <source>
        <dbReference type="UniProtKB" id="P05106"/>
    </source>
</evidence>
<evidence type="ECO:0000250" key="2">
    <source>
        <dbReference type="UniProtKB" id="P18564"/>
    </source>
</evidence>
<evidence type="ECO:0000250" key="3">
    <source>
        <dbReference type="UniProtKB" id="Q9Z0T9"/>
    </source>
</evidence>
<evidence type="ECO:0000255" key="4"/>
<evidence type="ECO:0000255" key="5">
    <source>
        <dbReference type="PROSITE-ProRule" id="PRU01392"/>
    </source>
</evidence>
<evidence type="ECO:0000305" key="6"/>
<keyword id="KW-0106">Calcium</keyword>
<keyword id="KW-0130">Cell adhesion</keyword>
<keyword id="KW-0965">Cell junction</keyword>
<keyword id="KW-1003">Cell membrane</keyword>
<keyword id="KW-1015">Disulfide bond</keyword>
<keyword id="KW-0245">EGF-like domain</keyword>
<keyword id="KW-0325">Glycoprotein</keyword>
<keyword id="KW-1183">Host cell receptor for virus entry</keyword>
<keyword id="KW-0945">Host-virus interaction</keyword>
<keyword id="KW-0401">Integrin</keyword>
<keyword id="KW-0460">Magnesium</keyword>
<keyword id="KW-0472">Membrane</keyword>
<keyword id="KW-0479">Metal-binding</keyword>
<keyword id="KW-0675">Receptor</keyword>
<keyword id="KW-1185">Reference proteome</keyword>
<keyword id="KW-0677">Repeat</keyword>
<keyword id="KW-0732">Signal</keyword>
<keyword id="KW-0812">Transmembrane</keyword>
<keyword id="KW-1133">Transmembrane helix</keyword>
<feature type="signal peptide" evidence="4">
    <location>
        <begin position="1"/>
        <end position="21"/>
    </location>
</feature>
<feature type="chain" id="PRO_5000076878" description="Integrin beta-6">
    <location>
        <begin position="22"/>
        <end position="788"/>
    </location>
</feature>
<feature type="topological domain" description="Extracellular" evidence="4">
    <location>
        <begin position="22"/>
        <end position="709"/>
    </location>
</feature>
<feature type="transmembrane region" description="Helical" evidence="4">
    <location>
        <begin position="710"/>
        <end position="730"/>
    </location>
</feature>
<feature type="topological domain" description="Cytoplasmic" evidence="4">
    <location>
        <begin position="731"/>
        <end position="788"/>
    </location>
</feature>
<feature type="domain" description="PSI" evidence="4">
    <location>
        <begin position="22"/>
        <end position="71"/>
    </location>
</feature>
<feature type="domain" description="VWFA" evidence="1">
    <location>
        <begin position="131"/>
        <end position="371"/>
    </location>
</feature>
<feature type="domain" description="I-EGF 1" evidence="5">
    <location>
        <begin position="456"/>
        <end position="491"/>
    </location>
</feature>
<feature type="domain" description="I-EGF 2" evidence="5">
    <location>
        <begin position="492"/>
        <end position="538"/>
    </location>
</feature>
<feature type="domain" description="I-EGF 3" evidence="5">
    <location>
        <begin position="539"/>
        <end position="575"/>
    </location>
</feature>
<feature type="domain" description="I-EGF 4" evidence="5">
    <location>
        <begin position="576"/>
        <end position="615"/>
    </location>
</feature>
<feature type="region of interest" description="Interaction with HAX1" evidence="2">
    <location>
        <begin position="731"/>
        <end position="758"/>
    </location>
</feature>
<feature type="binding site" description="in MIDAS binding site" evidence="2">
    <location>
        <position position="140"/>
    </location>
    <ligand>
        <name>Mg(2+)</name>
        <dbReference type="ChEBI" id="CHEBI:18420"/>
    </ligand>
</feature>
<feature type="binding site" description="in MIDAS binding site" evidence="2">
    <location>
        <position position="142"/>
    </location>
    <ligand>
        <name>Mg(2+)</name>
        <dbReference type="ChEBI" id="CHEBI:18420"/>
    </ligand>
</feature>
<feature type="binding site" description="in ADMIDAS binding site" evidence="2">
    <location>
        <position position="144"/>
    </location>
    <ligand>
        <name>Ca(2+)</name>
        <dbReference type="ChEBI" id="CHEBI:29108"/>
        <label>1</label>
    </ligand>
</feature>
<feature type="binding site" description="in MIDAS binding site" evidence="1">
    <location>
        <position position="144"/>
    </location>
    <ligand>
        <name>Mg(2+)</name>
        <dbReference type="ChEBI" id="CHEBI:18420"/>
    </ligand>
</feature>
<feature type="binding site" description="in ADMIDAS binding site" evidence="2">
    <location>
        <position position="147"/>
    </location>
    <ligand>
        <name>Ca(2+)</name>
        <dbReference type="ChEBI" id="CHEBI:29108"/>
        <label>1</label>
    </ligand>
</feature>
<feature type="binding site" description="in ADMIDAS binding site" evidence="2">
    <location>
        <position position="148"/>
    </location>
    <ligand>
        <name>Ca(2+)</name>
        <dbReference type="ChEBI" id="CHEBI:29108"/>
        <label>1</label>
    </ligand>
</feature>
<feature type="binding site" description="in LIMBS binding site" evidence="2">
    <location>
        <position position="179"/>
    </location>
    <ligand>
        <name>Ca(2+)</name>
        <dbReference type="ChEBI" id="CHEBI:29108"/>
        <label>2</label>
    </ligand>
</feature>
<feature type="binding site" description="in LIMBS binding site" evidence="2">
    <location>
        <position position="235"/>
    </location>
    <ligand>
        <name>Ca(2+)</name>
        <dbReference type="ChEBI" id="CHEBI:29108"/>
        <label>2</label>
    </ligand>
</feature>
<feature type="binding site" description="in LIMBS binding site" evidence="2">
    <location>
        <position position="237"/>
    </location>
    <ligand>
        <name>Ca(2+)</name>
        <dbReference type="ChEBI" id="CHEBI:29108"/>
        <label>2</label>
    </ligand>
</feature>
<feature type="binding site" description="in LIMBS binding site" evidence="2">
    <location>
        <position position="239"/>
    </location>
    <ligand>
        <name>Ca(2+)</name>
        <dbReference type="ChEBI" id="CHEBI:29108"/>
        <label>2</label>
    </ligand>
</feature>
<feature type="binding site" description="in LIMBS binding site" evidence="2">
    <location>
        <position position="240"/>
    </location>
    <ligand>
        <name>Ca(2+)</name>
        <dbReference type="ChEBI" id="CHEBI:29108"/>
        <label>2</label>
    </ligand>
</feature>
<feature type="binding site" description="in MIDAS binding site" evidence="2">
    <location>
        <position position="240"/>
    </location>
    <ligand>
        <name>Mg(2+)</name>
        <dbReference type="ChEBI" id="CHEBI:18420"/>
    </ligand>
</feature>
<feature type="binding site" description="in ADMIDAS binding site and liganded-open conformation" evidence="1">
    <location>
        <position position="271"/>
    </location>
    <ligand>
        <name>Ca(2+)</name>
        <dbReference type="ChEBI" id="CHEBI:29108"/>
        <label>1</label>
    </ligand>
</feature>
<feature type="binding site" description="in ADMIDAS binding site and unliganded-closed conformation" evidence="2">
    <location>
        <position position="355"/>
    </location>
    <ligand>
        <name>Ca(2+)</name>
        <dbReference type="ChEBI" id="CHEBI:29108"/>
        <label>1</label>
    </ligand>
</feature>
<feature type="glycosylation site" description="N-linked (GlcNAc...) asparagine" evidence="4">
    <location>
        <position position="48"/>
    </location>
</feature>
<feature type="glycosylation site" description="N-linked (GlcNAc...) asparagine" evidence="4">
    <location>
        <position position="97"/>
    </location>
</feature>
<feature type="glycosylation site" description="N-linked (GlcNAc...) asparagine" evidence="4">
    <location>
        <position position="260"/>
    </location>
</feature>
<feature type="glycosylation site" description="N-linked (GlcNAc...) asparagine" evidence="4">
    <location>
        <position position="387"/>
    </location>
</feature>
<feature type="glycosylation site" description="N-linked (GlcNAc...) asparagine" evidence="4">
    <location>
        <position position="418"/>
    </location>
</feature>
<feature type="glycosylation site" description="N-linked (GlcNAc...) asparagine" evidence="4">
    <location>
        <position position="463"/>
    </location>
</feature>
<feature type="glycosylation site" description="N-linked (GlcNAc...) asparagine" evidence="4">
    <location>
        <position position="471"/>
    </location>
</feature>
<feature type="disulfide bond" evidence="2">
    <location>
        <begin position="23"/>
        <end position="41"/>
    </location>
</feature>
<feature type="disulfide bond" evidence="2">
    <location>
        <begin position="31"/>
        <end position="454"/>
    </location>
</feature>
<feature type="disulfide bond" evidence="2">
    <location>
        <begin position="34"/>
        <end position="59"/>
    </location>
</feature>
<feature type="disulfide bond" evidence="2">
    <location>
        <begin position="44"/>
        <end position="70"/>
    </location>
</feature>
<feature type="disulfide bond" evidence="2">
    <location>
        <begin position="197"/>
        <end position="204"/>
    </location>
</feature>
<feature type="disulfide bond" evidence="2">
    <location>
        <begin position="252"/>
        <end position="293"/>
    </location>
</feature>
<feature type="disulfide bond" evidence="2">
    <location>
        <begin position="394"/>
        <end position="406"/>
    </location>
</feature>
<feature type="disulfide bond" evidence="2">
    <location>
        <begin position="426"/>
        <end position="452"/>
    </location>
</feature>
<feature type="disulfide bond" evidence="5">
    <location>
        <begin position="456"/>
        <end position="476"/>
    </location>
</feature>
<feature type="disulfide bond" evidence="5">
    <location>
        <begin position="467"/>
        <end position="479"/>
    </location>
</feature>
<feature type="disulfide bond" evidence="5">
    <location>
        <begin position="481"/>
        <end position="490"/>
    </location>
</feature>
<feature type="disulfide bond" evidence="5">
    <location>
        <begin position="492"/>
        <end position="519"/>
    </location>
</feature>
<feature type="disulfide bond" evidence="5">
    <location>
        <begin position="502"/>
        <end position="517"/>
    </location>
</feature>
<feature type="disulfide bond" evidence="5">
    <location>
        <begin position="511"/>
        <end position="522"/>
    </location>
</feature>
<feature type="disulfide bond" evidence="5">
    <location>
        <begin position="524"/>
        <end position="537"/>
    </location>
</feature>
<feature type="disulfide bond" evidence="5">
    <location>
        <begin position="539"/>
        <end position="560"/>
    </location>
</feature>
<feature type="disulfide bond" evidence="5">
    <location>
        <begin position="544"/>
        <end position="558"/>
    </location>
</feature>
<feature type="disulfide bond" evidence="5">
    <location>
        <begin position="552"/>
        <end position="563"/>
    </location>
</feature>
<feature type="disulfide bond" evidence="5">
    <location>
        <begin position="565"/>
        <end position="574"/>
    </location>
</feature>
<feature type="disulfide bond" evidence="5">
    <location>
        <begin position="576"/>
        <end position="599"/>
    </location>
</feature>
<feature type="disulfide bond" evidence="5">
    <location>
        <begin position="583"/>
        <end position="597"/>
    </location>
</feature>
<feature type="disulfide bond" evidence="5">
    <location>
        <begin position="591"/>
        <end position="602"/>
    </location>
</feature>
<feature type="disulfide bond" evidence="5">
    <location>
        <begin position="604"/>
        <end position="614"/>
    </location>
</feature>
<feature type="disulfide bond" evidence="1">
    <location>
        <begin position="617"/>
        <end position="620"/>
    </location>
</feature>
<feature type="disulfide bond" evidence="1">
    <location>
        <begin position="624"/>
        <end position="670"/>
    </location>
</feature>
<feature type="disulfide bond" evidence="1">
    <location>
        <begin position="630"/>
        <end position="649"/>
    </location>
</feature>
<feature type="disulfide bond" evidence="1">
    <location>
        <begin position="633"/>
        <end position="645"/>
    </location>
</feature>
<feature type="disulfide bond" evidence="1">
    <location>
        <begin position="678"/>
        <end position="702"/>
    </location>
</feature>
<name>ITB6_PIG</name>
<sequence>MGIELLCLFFLFLGRNDHVQGGCALGGAETCEDCLLIGPQCAWCSQENFTYLSGVGERCDTPANLLAKGCQLNFIENPLSQVEILTNKPLSIGRQKNSSSIVQIAPQSLTLKLRPGSEQTLQVQVRQTEDYPVDLYYLMDLSASMDDDLNTIKELGSLLSKEMSKLTSNFRLGFGSFVEKPISPFMKTTPEEIANPCSSIPYFCLPTFGFKHILPLTNDAERFNEIVKNQKISANIDTPEGGFDAIMQAAVCKEKIGWRNDSLHLLVFVSDADSHFGMDSKLAGIVIPNDGLCHLDSKNEYSMSTVLEYPTIGQLIDKLVQNNVLLIFAVTQEQVHLYENYAKLIPGATVGVLQKDSGNILQLIISAYEELRSEVELEVLGDTEGLNLSFTAICNNGTPFPHQKKCSHMKVGDTASFNMTVGIPNCEKRSRHVIVKPVGLGDALEILISPECSCDCQKEVEVNSSKCNHGNGSFQCGVCACNPGHMGPHCECGEDTLSMDSCREAPEHLSCSGRGDCYCGQCTCHLSPYGNIYGPYCQCDDFSCVRHKGLLCGDNGDCECGECVCRSGWTGEYCNCTTSTDQCVSEDGVLCSGRGDCVCGKCICTNPGASGLTCERCPTCGDPCNSKRSCIECHLSADGQAREDCVDKCKLAGATISEEEDFSKDSAVSCSLQGENDCLITFLITTDNEGKTIIHSISEKDCPKPPNSPMIMLGVSLAILLIGVVLLCIWKLLVSFHDRKEVAKFEAERSKAKWQTGTNPLYRGSTSTFKNVTYKHREKQKVDLSMDG</sequence>
<protein>
    <recommendedName>
        <fullName>Integrin beta-6</fullName>
    </recommendedName>
</protein>
<accession>Q1RPR6</accession>
<gene>
    <name type="primary">ITGB6</name>
</gene>
<reference key="1">
    <citation type="submission" date="2005-10" db="EMBL/GenBank/DDBJ databases">
        <title>Analysis of the genetic background of juvenile hairlessness in pigs.</title>
        <authorList>
            <person name="Bruun C.S."/>
            <person name="Joergensen C.B."/>
            <person name="Christensen K."/>
            <person name="Fredholm M."/>
        </authorList>
    </citation>
    <scope>NUCLEOTIDE SEQUENCE [MRNA]</scope>
    <source>
        <tissue>Lung</tissue>
    </source>
</reference>
<proteinExistence type="evidence at transcript level"/>